<protein>
    <recommendedName>
        <fullName evidence="1">NADH-quinone oxidoreductase subunit C/D</fullName>
        <ecNumber evidence="1">7.1.1.-</ecNumber>
    </recommendedName>
    <alternativeName>
        <fullName evidence="1">NADH dehydrogenase I subunit C/D</fullName>
    </alternativeName>
    <alternativeName>
        <fullName evidence="1">NDH-1 subunit C/D</fullName>
    </alternativeName>
</protein>
<evidence type="ECO:0000255" key="1">
    <source>
        <dbReference type="HAMAP-Rule" id="MF_01359"/>
    </source>
</evidence>
<comment type="function">
    <text evidence="1">NDH-1 shuttles electrons from NADH, via FMN and iron-sulfur (Fe-S) centers, to quinones in the respiratory chain. The immediate electron acceptor for the enzyme in this species is believed to be ubiquinone. Couples the redox reaction to proton translocation (for every two electrons transferred, four hydrogen ions are translocated across the cytoplasmic membrane), and thus conserves the redox energy in a proton gradient.</text>
</comment>
<comment type="catalytic activity">
    <reaction evidence="1">
        <text>a quinone + NADH + 5 H(+)(in) = a quinol + NAD(+) + 4 H(+)(out)</text>
        <dbReference type="Rhea" id="RHEA:57888"/>
        <dbReference type="ChEBI" id="CHEBI:15378"/>
        <dbReference type="ChEBI" id="CHEBI:24646"/>
        <dbReference type="ChEBI" id="CHEBI:57540"/>
        <dbReference type="ChEBI" id="CHEBI:57945"/>
        <dbReference type="ChEBI" id="CHEBI:132124"/>
    </reaction>
</comment>
<comment type="subunit">
    <text evidence="1">NDH-1 is composed of 13 different subunits. Subunits NuoB, CD, E, F, and G constitute the peripheral sector of the complex.</text>
</comment>
<comment type="subcellular location">
    <subcellularLocation>
        <location evidence="1">Cell inner membrane</location>
        <topology evidence="1">Peripheral membrane protein</topology>
        <orientation evidence="1">Cytoplasmic side</orientation>
    </subcellularLocation>
</comment>
<comment type="similarity">
    <text evidence="1">In the N-terminal section; belongs to the complex I 30 kDa subunit family.</text>
</comment>
<comment type="similarity">
    <text evidence="1">In the C-terminal section; belongs to the complex I 49 kDa subunit family.</text>
</comment>
<feature type="chain" id="PRO_0000358664" description="NADH-quinone oxidoreductase subunit C/D">
    <location>
        <begin position="1"/>
        <end position="593"/>
    </location>
</feature>
<feature type="region of interest" description="NADH dehydrogenase I subunit C" evidence="1">
    <location>
        <begin position="1"/>
        <end position="184"/>
    </location>
</feature>
<feature type="region of interest" description="NADH dehydrogenase I subunit D" evidence="1">
    <location>
        <begin position="208"/>
        <end position="593"/>
    </location>
</feature>
<proteinExistence type="inferred from homology"/>
<reference key="1">
    <citation type="submission" date="2008-02" db="EMBL/GenBank/DDBJ databases">
        <title>Complete sequence of Pseudomonas putida W619.</title>
        <authorList>
            <person name="Copeland A."/>
            <person name="Lucas S."/>
            <person name="Lapidus A."/>
            <person name="Barry K."/>
            <person name="Detter J.C."/>
            <person name="Glavina del Rio T."/>
            <person name="Dalin E."/>
            <person name="Tice H."/>
            <person name="Pitluck S."/>
            <person name="Chain P."/>
            <person name="Malfatti S."/>
            <person name="Shin M."/>
            <person name="Vergez L."/>
            <person name="Schmutz J."/>
            <person name="Larimer F."/>
            <person name="Land M."/>
            <person name="Hauser L."/>
            <person name="Kyrpides N."/>
            <person name="Kim E."/>
            <person name="Taghavi S."/>
            <person name="Vangronsveld D."/>
            <person name="van der Lelie D."/>
            <person name="Richardson P."/>
        </authorList>
    </citation>
    <scope>NUCLEOTIDE SEQUENCE [LARGE SCALE GENOMIC DNA]</scope>
    <source>
        <strain>W619</strain>
    </source>
</reference>
<sequence length="593" mass="67663">MTADNAIFIPPYKADDQDVVVELHNRFGAEAFVAQETRTGMPVLWVKRAQLKEVLSFLRGVSKPYSMLYDLHGVDERLRTQRRGLPAADFSVFYHLLSVERNSDVMIKVSLSEGDLNLPTVTGIWPNANWYEREVWDMFGIDFAGHPHLSRIMMPPTWEGHPLRKDYPARATEFDPYSLTLAKQQLEEESARFNPEAWGMKRQGANEDYMFLNLGPNHPSAHGAFRIVLQLDGEEIVDCVPDIGYHHRGAEKMAERQSWHSFIPYTDRIDYLGGVMNNLPYVLAVEKLAGIQVPQKVDVIRIMLAEFFRITSHLLFLGTYIQDVGAMTPVFFTFTDRQRAYTVIEAITGFRLHPAWYRIGGVAHDLPRGWEKLVKDFVEWLPKRLDEYTKAALQNSILKGRTIGVAAYNTKEALEWGTTGAGLRATGCDFDLRKARPYSGYENFEFEVPLAHNGDAYDRCMVRVEEMRQSIRIIDQCLRNMPEGPYKADHPLTTPPPKERTLQHIETLITHFLQVSWGPVMPANESFQMIEATKGINSYYLTSDGGTMSYRTRIRTPSYPHLQQIPSVIKGSMVADLIAYLGSIDFVMADVDR</sequence>
<keyword id="KW-0997">Cell inner membrane</keyword>
<keyword id="KW-1003">Cell membrane</keyword>
<keyword id="KW-0472">Membrane</keyword>
<keyword id="KW-0511">Multifunctional enzyme</keyword>
<keyword id="KW-0520">NAD</keyword>
<keyword id="KW-0874">Quinone</keyword>
<keyword id="KW-1278">Translocase</keyword>
<keyword id="KW-0813">Transport</keyword>
<keyword id="KW-0830">Ubiquinone</keyword>
<accession>B1J6N2</accession>
<organism>
    <name type="scientific">Pseudomonas putida (strain W619)</name>
    <dbReference type="NCBI Taxonomy" id="390235"/>
    <lineage>
        <taxon>Bacteria</taxon>
        <taxon>Pseudomonadati</taxon>
        <taxon>Pseudomonadota</taxon>
        <taxon>Gammaproteobacteria</taxon>
        <taxon>Pseudomonadales</taxon>
        <taxon>Pseudomonadaceae</taxon>
        <taxon>Pseudomonas</taxon>
    </lineage>
</organism>
<dbReference type="EC" id="7.1.1.-" evidence="1"/>
<dbReference type="EMBL" id="CP000949">
    <property type="protein sequence ID" value="ACA72374.1"/>
    <property type="molecule type" value="Genomic_DNA"/>
</dbReference>
<dbReference type="SMR" id="B1J6N2"/>
<dbReference type="STRING" id="390235.PputW619_1871"/>
<dbReference type="KEGG" id="ppw:PputW619_1871"/>
<dbReference type="eggNOG" id="COG0649">
    <property type="taxonomic scope" value="Bacteria"/>
</dbReference>
<dbReference type="eggNOG" id="COG0852">
    <property type="taxonomic scope" value="Bacteria"/>
</dbReference>
<dbReference type="HOGENOM" id="CLU_015134_3_2_6"/>
<dbReference type="OrthoDB" id="9801496at2"/>
<dbReference type="GO" id="GO:0030964">
    <property type="term" value="C:NADH dehydrogenase complex"/>
    <property type="evidence" value="ECO:0007669"/>
    <property type="project" value="InterPro"/>
</dbReference>
<dbReference type="GO" id="GO:0005886">
    <property type="term" value="C:plasma membrane"/>
    <property type="evidence" value="ECO:0007669"/>
    <property type="project" value="UniProtKB-SubCell"/>
</dbReference>
<dbReference type="GO" id="GO:0051287">
    <property type="term" value="F:NAD binding"/>
    <property type="evidence" value="ECO:0007669"/>
    <property type="project" value="InterPro"/>
</dbReference>
<dbReference type="GO" id="GO:0008137">
    <property type="term" value="F:NADH dehydrogenase (ubiquinone) activity"/>
    <property type="evidence" value="ECO:0007669"/>
    <property type="project" value="InterPro"/>
</dbReference>
<dbReference type="GO" id="GO:0050136">
    <property type="term" value="F:NADH:ubiquinone reductase (non-electrogenic) activity"/>
    <property type="evidence" value="ECO:0007669"/>
    <property type="project" value="UniProtKB-UniRule"/>
</dbReference>
<dbReference type="GO" id="GO:0048038">
    <property type="term" value="F:quinone binding"/>
    <property type="evidence" value="ECO:0007669"/>
    <property type="project" value="UniProtKB-KW"/>
</dbReference>
<dbReference type="FunFam" id="1.10.645.10:FF:000001">
    <property type="entry name" value="NADH-quinone oxidoreductase subunit C/D"/>
    <property type="match status" value="1"/>
</dbReference>
<dbReference type="FunFam" id="3.30.460.80:FF:000001">
    <property type="entry name" value="NADH-quinone oxidoreductase subunit C/D"/>
    <property type="match status" value="1"/>
</dbReference>
<dbReference type="Gene3D" id="1.10.645.10">
    <property type="entry name" value="Cytochrome-c3 Hydrogenase, chain B"/>
    <property type="match status" value="1"/>
</dbReference>
<dbReference type="Gene3D" id="3.30.460.80">
    <property type="entry name" value="NADH:ubiquinone oxidoreductase, 30kDa subunit"/>
    <property type="match status" value="1"/>
</dbReference>
<dbReference type="HAMAP" id="MF_01357">
    <property type="entry name" value="NDH1_NuoC"/>
    <property type="match status" value="1"/>
</dbReference>
<dbReference type="HAMAP" id="MF_01359">
    <property type="entry name" value="NDH1_NuoCD_1"/>
    <property type="match status" value="1"/>
</dbReference>
<dbReference type="HAMAP" id="MF_01358">
    <property type="entry name" value="NDH1_NuoD"/>
    <property type="match status" value="1"/>
</dbReference>
<dbReference type="InterPro" id="IPR010218">
    <property type="entry name" value="NADH_DH_suC"/>
</dbReference>
<dbReference type="InterPro" id="IPR023062">
    <property type="entry name" value="NADH_DH_suCD"/>
</dbReference>
<dbReference type="InterPro" id="IPR001135">
    <property type="entry name" value="NADH_Q_OxRdtase_suD"/>
</dbReference>
<dbReference type="InterPro" id="IPR037232">
    <property type="entry name" value="NADH_quin_OxRdtase_su_C/D-like"/>
</dbReference>
<dbReference type="InterPro" id="IPR001268">
    <property type="entry name" value="NADH_UbQ_OxRdtase_30kDa_su"/>
</dbReference>
<dbReference type="InterPro" id="IPR014029">
    <property type="entry name" value="NADH_UbQ_OxRdtase_49kDa_CS"/>
</dbReference>
<dbReference type="InterPro" id="IPR022885">
    <property type="entry name" value="NDH1_su_D/H"/>
</dbReference>
<dbReference type="InterPro" id="IPR029014">
    <property type="entry name" value="NiFe-Hase_large"/>
</dbReference>
<dbReference type="NCBIfam" id="TIGR01961">
    <property type="entry name" value="NuoC_fam"/>
    <property type="match status" value="1"/>
</dbReference>
<dbReference type="NCBIfam" id="TIGR01962">
    <property type="entry name" value="NuoD"/>
    <property type="match status" value="1"/>
</dbReference>
<dbReference type="NCBIfam" id="NF004739">
    <property type="entry name" value="PRK06075.1"/>
    <property type="match status" value="1"/>
</dbReference>
<dbReference type="NCBIfam" id="NF008728">
    <property type="entry name" value="PRK11742.1"/>
    <property type="match status" value="1"/>
</dbReference>
<dbReference type="PANTHER" id="PTHR11993:SF45">
    <property type="entry name" value="NADH-QUINONE OXIDOREDUCTASE SUBUNIT C_D"/>
    <property type="match status" value="1"/>
</dbReference>
<dbReference type="PANTHER" id="PTHR11993">
    <property type="entry name" value="NADH-UBIQUINONE OXIDOREDUCTASE 49 KDA SUBUNIT"/>
    <property type="match status" value="1"/>
</dbReference>
<dbReference type="Pfam" id="PF00329">
    <property type="entry name" value="Complex1_30kDa"/>
    <property type="match status" value="1"/>
</dbReference>
<dbReference type="Pfam" id="PF00346">
    <property type="entry name" value="Complex1_49kDa"/>
    <property type="match status" value="1"/>
</dbReference>
<dbReference type="SUPFAM" id="SSF56762">
    <property type="entry name" value="HydB/Nqo4-like"/>
    <property type="match status" value="1"/>
</dbReference>
<dbReference type="SUPFAM" id="SSF143243">
    <property type="entry name" value="Nqo5-like"/>
    <property type="match status" value="1"/>
</dbReference>
<dbReference type="PROSITE" id="PS00535">
    <property type="entry name" value="COMPLEX1_49K"/>
    <property type="match status" value="1"/>
</dbReference>
<gene>
    <name evidence="1" type="primary">nuoC</name>
    <name evidence="1" type="synonym">nuoCD</name>
    <name evidence="1" type="synonym">nuoD</name>
    <name type="ordered locus">PputW619_1871</name>
</gene>
<name>NUOCD_PSEPW</name>